<proteinExistence type="evidence at protein level"/>
<accession>Q92633</accession>
<accession>B4DK36</accession>
<accession>O00656</accession>
<accession>O00722</accession>
<accession>P78351</accession>
<keyword id="KW-0002">3D-structure</keyword>
<keyword id="KW-0025">Alternative splicing</keyword>
<keyword id="KW-1003">Cell membrane</keyword>
<keyword id="KW-1015">Disulfide bond</keyword>
<keyword id="KW-0967">Endosome</keyword>
<keyword id="KW-0297">G-protein coupled receptor</keyword>
<keyword id="KW-0325">Glycoprotein</keyword>
<keyword id="KW-0446">Lipid-binding</keyword>
<keyword id="KW-0472">Membrane</keyword>
<keyword id="KW-0597">Phosphoprotein</keyword>
<keyword id="KW-1267">Proteomics identification</keyword>
<keyword id="KW-0675">Receptor</keyword>
<keyword id="KW-1185">Reference proteome</keyword>
<keyword id="KW-0807">Transducer</keyword>
<keyword id="KW-0812">Transmembrane</keyword>
<keyword id="KW-1133">Transmembrane helix</keyword>
<sequence>MAAISTSIPVISQPQFTAMNEPQCFYNESIAFFYNRSGKHLATEWNTVSKLVMGLGITVCIFIMLANLLVMVAIYVNRRFHFPIYYLMANLAAADFFAGLAYFYLMFNTGPNTRRLTVSTWLLRQGLIDTSLTASVANLLAIAIERHITVFRMQLHTRMSNRRVVVVIVVIWTMAIVMGAIPSVGWNCICDIENCSNMAPLYSDSYLVFWAIFNLVTFVVMVVLYAHIFGYVRQRTMRMSRHSSGPRRNRDTMMSLLKTVVIVLGAFIICWTPGLVLLLLDVCCPQCDVLAYEKFFLLLAEFNSAMNPIIYSYRDKEMSATFRQILCCQRSENPTGPTEGSDRSASSLNHTILAGVHSNDHSVV</sequence>
<gene>
    <name type="primary">LPAR1</name>
    <name type="synonym">EDG2</name>
    <name type="synonym">LPA1</name>
</gene>
<protein>
    <recommendedName>
        <fullName>Lysophosphatidic acid receptor 1</fullName>
        <shortName>LPA receptor 1</shortName>
        <shortName>LPA-1</shortName>
    </recommendedName>
    <alternativeName>
        <fullName evidence="13">Lysophosphatidic acid receptor Edg-2</fullName>
    </alternativeName>
</protein>
<feature type="chain" id="PRO_0000069417" description="Lysophosphatidic acid receptor 1">
    <location>
        <begin position="1"/>
        <end position="364"/>
    </location>
</feature>
<feature type="topological domain" description="Extracellular">
    <location>
        <begin position="1"/>
        <end position="50"/>
    </location>
</feature>
<feature type="transmembrane region" description="Helical; Name=1">
    <location>
        <begin position="51"/>
        <end position="75"/>
    </location>
</feature>
<feature type="topological domain" description="Cytoplasmic">
    <location>
        <begin position="76"/>
        <end position="83"/>
    </location>
</feature>
<feature type="transmembrane region" description="Helical; Name=2">
    <location>
        <begin position="84"/>
        <end position="107"/>
    </location>
</feature>
<feature type="topological domain" description="Extracellular">
    <location>
        <begin position="108"/>
        <end position="121"/>
    </location>
</feature>
<feature type="transmembrane region" description="Helical; Name=3">
    <location>
        <begin position="122"/>
        <end position="144"/>
    </location>
</feature>
<feature type="topological domain" description="Cytoplasmic">
    <location>
        <begin position="145"/>
        <end position="163"/>
    </location>
</feature>
<feature type="transmembrane region" description="Helical; Name=4">
    <location>
        <begin position="164"/>
        <end position="184"/>
    </location>
</feature>
<feature type="topological domain" description="Extracellular">
    <location>
        <begin position="185"/>
        <end position="204"/>
    </location>
</feature>
<feature type="transmembrane region" description="Helical; Name=5">
    <location>
        <begin position="205"/>
        <end position="225"/>
    </location>
</feature>
<feature type="topological domain" description="Cytoplasmic">
    <location>
        <begin position="226"/>
        <end position="255"/>
    </location>
</feature>
<feature type="transmembrane region" description="Helical; Name=6">
    <location>
        <begin position="256"/>
        <end position="280"/>
    </location>
</feature>
<feature type="topological domain" description="Extracellular">
    <location>
        <begin position="281"/>
        <end position="294"/>
    </location>
</feature>
<feature type="transmembrane region" description="Helical; Name=7">
    <location>
        <begin position="295"/>
        <end position="315"/>
    </location>
</feature>
<feature type="topological domain" description="Cytoplasmic">
    <location>
        <begin position="316"/>
        <end position="364"/>
    </location>
</feature>
<feature type="binding site" evidence="16">
    <location>
        <position position="39"/>
    </location>
    <ligand>
        <name>a 1-acyl-sn-glycero-3-phosphate</name>
        <dbReference type="ChEBI" id="CHEBI:57970"/>
    </ligand>
</feature>
<feature type="binding site" evidence="16">
    <location>
        <begin position="124"/>
        <end position="129"/>
    </location>
    <ligand>
        <name>a 1-acyl-sn-glycero-3-phosphate</name>
        <dbReference type="ChEBI" id="CHEBI:57970"/>
    </ligand>
</feature>
<feature type="binding site" evidence="16">
    <location>
        <position position="210"/>
    </location>
    <ligand>
        <name>a 1-acyl-sn-glycero-3-phosphate</name>
        <dbReference type="ChEBI" id="CHEBI:57970"/>
    </ligand>
</feature>
<feature type="modified residue" description="Phosphoserine" evidence="21">
    <location>
        <position position="341"/>
    </location>
</feature>
<feature type="modified residue" description="Phosphothreonine" evidence="1">
    <location>
        <position position="351"/>
    </location>
</feature>
<feature type="glycosylation site" description="N-linked (GlcNAc...) asparagine" evidence="2">
    <location>
        <position position="27"/>
    </location>
</feature>
<feature type="glycosylation site" description="N-linked (GlcNAc...) asparagine" evidence="2">
    <location>
        <position position="35"/>
    </location>
</feature>
<feature type="disulfide bond" evidence="18 19 20">
    <location>
        <begin position="24"/>
        <end position="190"/>
    </location>
</feature>
<feature type="disulfide bond" evidence="18 19 20">
    <location>
        <begin position="188"/>
        <end position="195"/>
    </location>
</feature>
<feature type="disulfide bond" evidence="18 19 20">
    <location>
        <begin position="284"/>
        <end position="287"/>
    </location>
</feature>
<feature type="splice variant" id="VSP_057046" description="In isoform 2." evidence="12">
    <original>MAAISTSIPVISQPQ</original>
    <variation>MLLLLIPAHSSVLENE</variation>
    <location>
        <begin position="1"/>
        <end position="15"/>
    </location>
</feature>
<feature type="sequence variant" id="VAR_049414" description="In dbSNP:rs11542862.">
    <original>N</original>
    <variation>S</variation>
    <location>
        <position position="77"/>
    </location>
</feature>
<feature type="mutagenesis site" description="Impairs localization at the cell membrane." evidence="8">
    <original>Y</original>
    <variation>A</variation>
    <location>
        <position position="85"/>
    </location>
</feature>
<feature type="mutagenesis site" description="Impairs localization at the cell membrane." evidence="8">
    <original>L</original>
    <variation>A</variation>
    <location>
        <position position="87"/>
    </location>
</feature>
<feature type="mutagenesis site" description="Impairs localization at the cell membrane." evidence="8">
    <original>IL</original>
    <variation>AA</variation>
    <location>
        <begin position="325"/>
        <end position="326"/>
    </location>
</feature>
<feature type="sequence conflict" description="In Ref. 1; AAC51139." evidence="14" ref="1">
    <original>G</original>
    <variation>S</variation>
    <location>
        <position position="340"/>
    </location>
</feature>
<feature type="helix" evidence="23">
    <location>
        <begin position="30"/>
        <end position="36"/>
    </location>
</feature>
<feature type="helix" evidence="23">
    <location>
        <begin position="47"/>
        <end position="76"/>
    </location>
</feature>
<feature type="helix" evidence="22">
    <location>
        <begin position="78"/>
        <end position="80"/>
    </location>
</feature>
<feature type="helix" evidence="23">
    <location>
        <begin position="83"/>
        <end position="105"/>
    </location>
</feature>
<feature type="turn" evidence="23">
    <location>
        <begin position="106"/>
        <end position="108"/>
    </location>
</feature>
<feature type="helix" evidence="23">
    <location>
        <begin position="110"/>
        <end position="115"/>
    </location>
</feature>
<feature type="helix" evidence="23">
    <location>
        <begin position="118"/>
        <end position="150"/>
    </location>
</feature>
<feature type="helix" evidence="23">
    <location>
        <begin position="162"/>
        <end position="184"/>
    </location>
</feature>
<feature type="strand" evidence="23">
    <location>
        <begin position="192"/>
        <end position="194"/>
    </location>
</feature>
<feature type="strand" evidence="23">
    <location>
        <begin position="197"/>
        <end position="199"/>
    </location>
</feature>
<feature type="helix" evidence="23">
    <location>
        <begin position="204"/>
        <end position="237"/>
    </location>
</feature>
<feature type="helix" evidence="23">
    <location>
        <begin position="252"/>
        <end position="283"/>
    </location>
</feature>
<feature type="turn" evidence="22">
    <location>
        <begin position="285"/>
        <end position="287"/>
    </location>
</feature>
<feature type="strand" evidence="23">
    <location>
        <begin position="290"/>
        <end position="292"/>
    </location>
</feature>
<feature type="helix" evidence="23">
    <location>
        <begin position="293"/>
        <end position="310"/>
    </location>
</feature>
<feature type="strand" evidence="24">
    <location>
        <begin position="312"/>
        <end position="314"/>
    </location>
</feature>
<feature type="helix" evidence="23">
    <location>
        <begin position="316"/>
        <end position="321"/>
    </location>
</feature>
<comment type="function">
    <text evidence="1 4 5 6 7 8 9 10 11 15 17">Receptor for lysophosphatidic acid (LPA) (PubMed:19306925, PubMed:25025571, PubMed:26091040, PubMed:9070858). Plays a role in the reorganization of the actin cytoskeleton, cell migration, differentiation and proliferation, and thereby contributes to the responses to tissue damage and infectious agents. Activates downstream signaling cascades via the G(i)/G(o), G(12)/G(13), and G(q) families of heteromeric G proteins. Signaling inhibits adenylyl cyclase activity and decreases cellular cAMP levels (PubMed:26091040). Signaling triggers an increase of cytoplasmic Ca(2+) levels (PubMed:19656035, PubMed:19733258, PubMed:26091040). Activates RALA; this leads to the activation of phospholipase C (PLC) and the formation of inositol 1,4,5-trisphosphate (PubMed:19306925). Signaling mediates activation of down-stream MAP kinases (By similarity). Contributes to the regulation of cell shape. Promotes Rho-dependent reorganization of the actin cytoskeleton in neuronal cells and neurite retraction (PubMed:26091040). Promotes the activation of Rho and the formation of actin stress fibers (PubMed:26091040). Promotes formation of lamellipodia at the leading edge of migrating cells via activation of RAC1 (By similarity). Through its function as LPA receptor, plays a role in chemotaxis and cell migration, including responses to injury and wounding (PubMed:18066075, PubMed:19656035, PubMed:19733258). Plays a role in triggering inflammation in response to bacterial lipopolysaccharide (LPS) via its interaction with CD14. Promotes cell proliferation in response to LPA (By similarity). Inhibits the intracellular ciliogenesis pathway in response to LPA and through AKT1 activation (PubMed:31204173). Required for normal skeleton development. May play a role in osteoblast differentiation. Required for normal brain development. Required for normal proliferation, survival and maturation of newly formed neurons in the adult dentate gyrus. Plays a role in pain perception and in the initiation of neuropathic pain (By similarity).</text>
</comment>
<comment type="subunit">
    <text evidence="1 5">Interacts with RALA and GRK2 (PubMed:19306925). Interacts with GNAQ and GNA13. Interacts with CD14; the interaction is enhanced by exposure to bacterial lipopolysaccharide (LPS) (By similarity).</text>
</comment>
<comment type="subcellular location">
    <subcellularLocation>
        <location evidence="5 8">Cell surface</location>
    </subcellularLocation>
    <subcellularLocation>
        <location evidence="5 8 9 11">Cell membrane</location>
        <topology evidence="5 9">Multi-pass membrane protein</topology>
    </subcellularLocation>
    <subcellularLocation>
        <location evidence="5">Endosome</location>
    </subcellularLocation>
    <text evidence="5">Prior to LPA treatment found predominantly at the cell surface. Internalized after LPA treatment. Colocalizes with RALA in endocytic vesicles after LPA treatment.</text>
</comment>
<comment type="alternative products">
    <event type="alternative splicing"/>
    <isoform>
        <id>Q92633-1</id>
        <name>1</name>
        <sequence type="displayed"/>
    </isoform>
    <isoform>
        <id>Q92633-2</id>
        <name>2</name>
        <sequence type="described" ref="VSP_057046"/>
    </isoform>
</comment>
<comment type="tissue specificity">
    <text evidence="4 7 11">Expressed in many adult organs, including brain, heart, colon, small intestine, placenta, prostate, ovary, pancreas, testes, spleen, skeletal muscle, and kidney. Little or no expression in liver, lung, thymus, or peripheral blood leukocytes (PubMed:9070858). Detected in lung fibroblasts from bronchoalveolar fluid from patients with idiopathic pulmonary fibrosis (PubMed:18066075). Detected in bone marrow-derived mesenchymal stem cells (PubMed:19733258).</text>
</comment>
<comment type="PTM">
    <text evidence="8">N-glycosylated.</text>
</comment>
<comment type="similarity">
    <text evidence="3">Belongs to the G-protein coupled receptor 1 family.</text>
</comment>
<comment type="online information" name="Atlas of Genetics and Cytogenetics in Oncology and Haematology">
    <link uri="https://atlasgeneticsoncology.org/gene/40405/LPAR1"/>
</comment>
<organism>
    <name type="scientific">Homo sapiens</name>
    <name type="common">Human</name>
    <dbReference type="NCBI Taxonomy" id="9606"/>
    <lineage>
        <taxon>Eukaryota</taxon>
        <taxon>Metazoa</taxon>
        <taxon>Chordata</taxon>
        <taxon>Craniata</taxon>
        <taxon>Vertebrata</taxon>
        <taxon>Euteleostomi</taxon>
        <taxon>Mammalia</taxon>
        <taxon>Eutheria</taxon>
        <taxon>Euarchontoglires</taxon>
        <taxon>Primates</taxon>
        <taxon>Haplorrhini</taxon>
        <taxon>Catarrhini</taxon>
        <taxon>Hominidae</taxon>
        <taxon>Homo</taxon>
    </lineage>
</organism>
<reference key="1">
    <citation type="journal article" date="1997" name="Biochem. Biophys. Res. Commun.">
        <title>Molecular cloning of the human Edg2 protein and its identification as a functional cellular receptor for lysophosphatidic acid.</title>
        <authorList>
            <person name="An S."/>
            <person name="Dickens M.A."/>
            <person name="Bleu T."/>
            <person name="Hallmark O.G."/>
            <person name="Goetzl E.J."/>
        </authorList>
    </citation>
    <scope>NUCLEOTIDE SEQUENCE [MRNA] (ISOFORM 1)</scope>
    <scope>FUNCTION</scope>
    <scope>SUBCELLULAR LOCATION</scope>
    <scope>TISSUE SPECIFICITY</scope>
</reference>
<reference key="2">
    <citation type="journal article" date="1997" name="Curr. Opin. Cell Biol.">
        <title>Lysophosphatidic acid: G-protein signalling and cellular responses.</title>
        <authorList>
            <person name="Moolenaar W.H."/>
            <person name="Kranenburg O."/>
            <person name="Postma F.R."/>
            <person name="Zondag G.C.M."/>
        </authorList>
    </citation>
    <scope>NUCLEOTIDE SEQUENCE [MRNA] (ISOFORM 1)</scope>
    <scope>REVIEW</scope>
</reference>
<reference key="3">
    <citation type="submission" date="2003-06" db="EMBL/GenBank/DDBJ databases">
        <title>cDNA clones of human proteins involved in signal transduction sequenced by the Guthrie cDNA resource center (www.cdna.org).</title>
        <authorList>
            <person name="Kopatz S.A."/>
            <person name="Aronstam R.S."/>
            <person name="Sharma S.V."/>
        </authorList>
    </citation>
    <scope>NUCLEOTIDE SEQUENCE [LARGE SCALE MRNA] (ISOFORM 1)</scope>
    <source>
        <tissue>Brain</tissue>
    </source>
</reference>
<reference key="4">
    <citation type="journal article" date="2004" name="Nat. Genet.">
        <title>Complete sequencing and characterization of 21,243 full-length human cDNAs.</title>
        <authorList>
            <person name="Ota T."/>
            <person name="Suzuki Y."/>
            <person name="Nishikawa T."/>
            <person name="Otsuki T."/>
            <person name="Sugiyama T."/>
            <person name="Irie R."/>
            <person name="Wakamatsu A."/>
            <person name="Hayashi K."/>
            <person name="Sato H."/>
            <person name="Nagai K."/>
            <person name="Kimura K."/>
            <person name="Makita H."/>
            <person name="Sekine M."/>
            <person name="Obayashi M."/>
            <person name="Nishi T."/>
            <person name="Shibahara T."/>
            <person name="Tanaka T."/>
            <person name="Ishii S."/>
            <person name="Yamamoto J."/>
            <person name="Saito K."/>
            <person name="Kawai Y."/>
            <person name="Isono Y."/>
            <person name="Nakamura Y."/>
            <person name="Nagahari K."/>
            <person name="Murakami K."/>
            <person name="Yasuda T."/>
            <person name="Iwayanagi T."/>
            <person name="Wagatsuma M."/>
            <person name="Shiratori A."/>
            <person name="Sudo H."/>
            <person name="Hosoiri T."/>
            <person name="Kaku Y."/>
            <person name="Kodaira H."/>
            <person name="Kondo H."/>
            <person name="Sugawara M."/>
            <person name="Takahashi M."/>
            <person name="Kanda K."/>
            <person name="Yokoi T."/>
            <person name="Furuya T."/>
            <person name="Kikkawa E."/>
            <person name="Omura Y."/>
            <person name="Abe K."/>
            <person name="Kamihara K."/>
            <person name="Katsuta N."/>
            <person name="Sato K."/>
            <person name="Tanikawa M."/>
            <person name="Yamazaki M."/>
            <person name="Ninomiya K."/>
            <person name="Ishibashi T."/>
            <person name="Yamashita H."/>
            <person name="Murakawa K."/>
            <person name="Fujimori K."/>
            <person name="Tanai H."/>
            <person name="Kimata M."/>
            <person name="Watanabe M."/>
            <person name="Hiraoka S."/>
            <person name="Chiba Y."/>
            <person name="Ishida S."/>
            <person name="Ono Y."/>
            <person name="Takiguchi S."/>
            <person name="Watanabe S."/>
            <person name="Yosida M."/>
            <person name="Hotuta T."/>
            <person name="Kusano J."/>
            <person name="Kanehori K."/>
            <person name="Takahashi-Fujii A."/>
            <person name="Hara H."/>
            <person name="Tanase T.-O."/>
            <person name="Nomura Y."/>
            <person name="Togiya S."/>
            <person name="Komai F."/>
            <person name="Hara R."/>
            <person name="Takeuchi K."/>
            <person name="Arita M."/>
            <person name="Imose N."/>
            <person name="Musashino K."/>
            <person name="Yuuki H."/>
            <person name="Oshima A."/>
            <person name="Sasaki N."/>
            <person name="Aotsuka S."/>
            <person name="Yoshikawa Y."/>
            <person name="Matsunawa H."/>
            <person name="Ichihara T."/>
            <person name="Shiohata N."/>
            <person name="Sano S."/>
            <person name="Moriya S."/>
            <person name="Momiyama H."/>
            <person name="Satoh N."/>
            <person name="Takami S."/>
            <person name="Terashima Y."/>
            <person name="Suzuki O."/>
            <person name="Nakagawa S."/>
            <person name="Senoh A."/>
            <person name="Mizoguchi H."/>
            <person name="Goto Y."/>
            <person name="Shimizu F."/>
            <person name="Wakebe H."/>
            <person name="Hishigaki H."/>
            <person name="Watanabe T."/>
            <person name="Sugiyama A."/>
            <person name="Takemoto M."/>
            <person name="Kawakami B."/>
            <person name="Yamazaki M."/>
            <person name="Watanabe K."/>
            <person name="Kumagai A."/>
            <person name="Itakura S."/>
            <person name="Fukuzumi Y."/>
            <person name="Fujimori Y."/>
            <person name="Komiyama M."/>
            <person name="Tashiro H."/>
            <person name="Tanigami A."/>
            <person name="Fujiwara T."/>
            <person name="Ono T."/>
            <person name="Yamada K."/>
            <person name="Fujii Y."/>
            <person name="Ozaki K."/>
            <person name="Hirao M."/>
            <person name="Ohmori Y."/>
            <person name="Kawabata A."/>
            <person name="Hikiji T."/>
            <person name="Kobatake N."/>
            <person name="Inagaki H."/>
            <person name="Ikema Y."/>
            <person name="Okamoto S."/>
            <person name="Okitani R."/>
            <person name="Kawakami T."/>
            <person name="Noguchi S."/>
            <person name="Itoh T."/>
            <person name="Shigeta K."/>
            <person name="Senba T."/>
            <person name="Matsumura K."/>
            <person name="Nakajima Y."/>
            <person name="Mizuno T."/>
            <person name="Morinaga M."/>
            <person name="Sasaki M."/>
            <person name="Togashi T."/>
            <person name="Oyama M."/>
            <person name="Hata H."/>
            <person name="Watanabe M."/>
            <person name="Komatsu T."/>
            <person name="Mizushima-Sugano J."/>
            <person name="Satoh T."/>
            <person name="Shirai Y."/>
            <person name="Takahashi Y."/>
            <person name="Nakagawa K."/>
            <person name="Okumura K."/>
            <person name="Nagase T."/>
            <person name="Nomura N."/>
            <person name="Kikuchi H."/>
            <person name="Masuho Y."/>
            <person name="Yamashita R."/>
            <person name="Nakai K."/>
            <person name="Yada T."/>
            <person name="Nakamura Y."/>
            <person name="Ohara O."/>
            <person name="Isogai T."/>
            <person name="Sugano S."/>
        </authorList>
    </citation>
    <scope>NUCLEOTIDE SEQUENCE [LARGE SCALE MRNA] (ISOFORM 2)</scope>
    <source>
        <tissue>Thalamus</tissue>
    </source>
</reference>
<reference key="5">
    <citation type="journal article" date="2004" name="Nature">
        <title>DNA sequence and analysis of human chromosome 9.</title>
        <authorList>
            <person name="Humphray S.J."/>
            <person name="Oliver K."/>
            <person name="Hunt A.R."/>
            <person name="Plumb R.W."/>
            <person name="Loveland J.E."/>
            <person name="Howe K.L."/>
            <person name="Andrews T.D."/>
            <person name="Searle S."/>
            <person name="Hunt S.E."/>
            <person name="Scott C.E."/>
            <person name="Jones M.C."/>
            <person name="Ainscough R."/>
            <person name="Almeida J.P."/>
            <person name="Ambrose K.D."/>
            <person name="Ashwell R.I.S."/>
            <person name="Babbage A.K."/>
            <person name="Babbage S."/>
            <person name="Bagguley C.L."/>
            <person name="Bailey J."/>
            <person name="Banerjee R."/>
            <person name="Barker D.J."/>
            <person name="Barlow K.F."/>
            <person name="Bates K."/>
            <person name="Beasley H."/>
            <person name="Beasley O."/>
            <person name="Bird C.P."/>
            <person name="Bray-Allen S."/>
            <person name="Brown A.J."/>
            <person name="Brown J.Y."/>
            <person name="Burford D."/>
            <person name="Burrill W."/>
            <person name="Burton J."/>
            <person name="Carder C."/>
            <person name="Carter N.P."/>
            <person name="Chapman J.C."/>
            <person name="Chen Y."/>
            <person name="Clarke G."/>
            <person name="Clark S.Y."/>
            <person name="Clee C.M."/>
            <person name="Clegg S."/>
            <person name="Collier R.E."/>
            <person name="Corby N."/>
            <person name="Crosier M."/>
            <person name="Cummings A.T."/>
            <person name="Davies J."/>
            <person name="Dhami P."/>
            <person name="Dunn M."/>
            <person name="Dutta I."/>
            <person name="Dyer L.W."/>
            <person name="Earthrowl M.E."/>
            <person name="Faulkner L."/>
            <person name="Fleming C.J."/>
            <person name="Frankish A."/>
            <person name="Frankland J.A."/>
            <person name="French L."/>
            <person name="Fricker D.G."/>
            <person name="Garner P."/>
            <person name="Garnett J."/>
            <person name="Ghori J."/>
            <person name="Gilbert J.G.R."/>
            <person name="Glison C."/>
            <person name="Grafham D.V."/>
            <person name="Gribble S."/>
            <person name="Griffiths C."/>
            <person name="Griffiths-Jones S."/>
            <person name="Grocock R."/>
            <person name="Guy J."/>
            <person name="Hall R.E."/>
            <person name="Hammond S."/>
            <person name="Harley J.L."/>
            <person name="Harrison E.S.I."/>
            <person name="Hart E.A."/>
            <person name="Heath P.D."/>
            <person name="Henderson C.D."/>
            <person name="Hopkins B.L."/>
            <person name="Howard P.J."/>
            <person name="Howden P.J."/>
            <person name="Huckle E."/>
            <person name="Johnson C."/>
            <person name="Johnson D."/>
            <person name="Joy A.A."/>
            <person name="Kay M."/>
            <person name="Keenan S."/>
            <person name="Kershaw J.K."/>
            <person name="Kimberley A.M."/>
            <person name="King A."/>
            <person name="Knights A."/>
            <person name="Laird G.K."/>
            <person name="Langford C."/>
            <person name="Lawlor S."/>
            <person name="Leongamornlert D.A."/>
            <person name="Leversha M."/>
            <person name="Lloyd C."/>
            <person name="Lloyd D.M."/>
            <person name="Lovell J."/>
            <person name="Martin S."/>
            <person name="Mashreghi-Mohammadi M."/>
            <person name="Matthews L."/>
            <person name="McLaren S."/>
            <person name="McLay K.E."/>
            <person name="McMurray A."/>
            <person name="Milne S."/>
            <person name="Nickerson T."/>
            <person name="Nisbett J."/>
            <person name="Nordsiek G."/>
            <person name="Pearce A.V."/>
            <person name="Peck A.I."/>
            <person name="Porter K.M."/>
            <person name="Pandian R."/>
            <person name="Pelan S."/>
            <person name="Phillimore B."/>
            <person name="Povey S."/>
            <person name="Ramsey Y."/>
            <person name="Rand V."/>
            <person name="Scharfe M."/>
            <person name="Sehra H.K."/>
            <person name="Shownkeen R."/>
            <person name="Sims S.K."/>
            <person name="Skuce C.D."/>
            <person name="Smith M."/>
            <person name="Steward C.A."/>
            <person name="Swarbreck D."/>
            <person name="Sycamore N."/>
            <person name="Tester J."/>
            <person name="Thorpe A."/>
            <person name="Tracey A."/>
            <person name="Tromans A."/>
            <person name="Thomas D.W."/>
            <person name="Wall M."/>
            <person name="Wallis J.M."/>
            <person name="West A.P."/>
            <person name="Whitehead S.L."/>
            <person name="Willey D.L."/>
            <person name="Williams S.A."/>
            <person name="Wilming L."/>
            <person name="Wray P.W."/>
            <person name="Young L."/>
            <person name="Ashurst J.L."/>
            <person name="Coulson A."/>
            <person name="Blocker H."/>
            <person name="Durbin R.M."/>
            <person name="Sulston J.E."/>
            <person name="Hubbard T."/>
            <person name="Jackson M.J."/>
            <person name="Bentley D.R."/>
            <person name="Beck S."/>
            <person name="Rogers J."/>
            <person name="Dunham I."/>
        </authorList>
    </citation>
    <scope>NUCLEOTIDE SEQUENCE [LARGE SCALE GENOMIC DNA]</scope>
</reference>
<reference key="6">
    <citation type="journal article" date="2004" name="Genome Res.">
        <title>The status, quality, and expansion of the NIH full-length cDNA project: the Mammalian Gene Collection (MGC).</title>
        <authorList>
            <consortium name="The MGC Project Team"/>
        </authorList>
    </citation>
    <scope>NUCLEOTIDE SEQUENCE [LARGE SCALE MRNA] (ISOFORM 1)</scope>
    <source>
        <tissue>Hippocampus</tissue>
        <tissue>Testis</tissue>
    </source>
</reference>
<reference key="7">
    <citation type="journal article" date="2000" name="Mol. Pharmacol.">
        <title>Lysophosphatidic acid receptors.</title>
        <authorList>
            <person name="Contos J.J.A."/>
            <person name="Ishii I."/>
            <person name="Chun J."/>
        </authorList>
    </citation>
    <scope>REVIEW</scope>
</reference>
<reference key="8">
    <citation type="journal article" date="2008" name="Nat. Med.">
        <title>The lysophosphatidic acid receptor LPA1 links pulmonary fibrosis to lung injury by mediating fibroblast recruitment and vascular leak.</title>
        <authorList>
            <person name="Tager A.M."/>
            <person name="LaCamera P."/>
            <person name="Shea B.S."/>
            <person name="Campanella G.S."/>
            <person name="Selman M."/>
            <person name="Zhao Z."/>
            <person name="Polosukhin V."/>
            <person name="Wain J."/>
            <person name="Karimi-Shah B.A."/>
            <person name="Kim N.D."/>
            <person name="Hart W.K."/>
            <person name="Pardo A."/>
            <person name="Blackwell T.S."/>
            <person name="Xu Y."/>
            <person name="Chun J."/>
            <person name="Luster A.D."/>
        </authorList>
    </citation>
    <scope>FUNCTION</scope>
    <scope>TISSUE SPECIFICITY</scope>
</reference>
<reference key="9">
    <citation type="journal article" date="2009" name="Cell. Signal.">
        <title>Dual regulation of lysophosphatidic acid (LPA1) receptor signalling by Ral and GRK.</title>
        <authorList>
            <person name="Aziziyeh A.I."/>
            <person name="Li T.T."/>
            <person name="Pape C."/>
            <person name="Pampillo M."/>
            <person name="Chidiac P."/>
            <person name="Possmayer F."/>
            <person name="Babwah A.V."/>
            <person name="Bhattacharya M."/>
        </authorList>
    </citation>
    <scope>FUNCTION</scope>
    <scope>SUBCELLULAR LOCATION</scope>
    <scope>INTERACTION WITH RALA AND GRK2</scope>
</reference>
<reference key="10">
    <citation type="journal article" date="2009" name="J. Periodontology">
        <title>Lysophosphatidic acid signals through specific lysophosphatidic acid receptor subtypes to control key regenerative responses of human gingival and periodontal ligament fibroblasts.</title>
        <authorList>
            <person name="George J."/>
            <person name="Headen K.V."/>
            <person name="Ogunleye A.O."/>
            <person name="Perry G.A."/>
            <person name="Wilwerding T.M."/>
            <person name="Parrish L.C."/>
            <person name="McVaney T.P."/>
            <person name="Mattson J.S."/>
            <person name="Cerutis D.R."/>
        </authorList>
    </citation>
    <scope>FUNCTION</scope>
</reference>
<reference key="11">
    <citation type="journal article" date="2010" name="Biochim. Biophys. Acta">
        <title>Lysophosphatidic acid mediates migration of human mesenchymal stem cells stimulated by synovial fluid of patients with rheumatoid arthritis.</title>
        <authorList>
            <person name="Song H.Y."/>
            <person name="Lee M.J."/>
            <person name="Kim M.Y."/>
            <person name="Kim K.H."/>
            <person name="Lee I.H."/>
            <person name="Shin S.H."/>
            <person name="Lee J.S."/>
            <person name="Kim J.H."/>
        </authorList>
    </citation>
    <scope>FUNCTION</scope>
    <scope>TISSUE SPECIFICITY</scope>
</reference>
<reference key="12">
    <citation type="journal article" date="2014" name="Cell. Signal.">
        <title>Molecular regulation of lysophosphatidic acid receptor 1 trafficking to the cell surface.</title>
        <authorList>
            <person name="Zhao J."/>
            <person name="Wei J."/>
            <person name="Bowser R.K."/>
            <person name="Dong S."/>
            <person name="Xiao S."/>
            <person name="Zhao Y."/>
        </authorList>
    </citation>
    <scope>FUNCTION</scope>
    <scope>SUBCELLULAR LOCATION</scope>
    <scope>MUTAGENESIS OF TYR-85; LEU-87 AND 325-ILE-LEU-326</scope>
    <scope>GLYCOSYLATION</scope>
</reference>
<reference key="13">
    <citation type="journal article" date="2014" name="J. Proteomics">
        <title>An enzyme assisted RP-RPLC approach for in-depth analysis of human liver phosphoproteome.</title>
        <authorList>
            <person name="Bian Y."/>
            <person name="Song C."/>
            <person name="Cheng K."/>
            <person name="Dong M."/>
            <person name="Wang F."/>
            <person name="Huang J."/>
            <person name="Sun D."/>
            <person name="Wang L."/>
            <person name="Ye M."/>
            <person name="Zou H."/>
        </authorList>
    </citation>
    <scope>PHOSPHORYLATION [LARGE SCALE ANALYSIS] AT SER-341</scope>
    <scope>IDENTIFICATION BY MASS SPECTROMETRY [LARGE SCALE ANALYSIS]</scope>
    <source>
        <tissue>Liver</tissue>
    </source>
</reference>
<reference key="14">
    <citation type="journal article" date="2015" name="Cell. Mol. Life Sci.">
        <title>Comparative analyses of lysophosphatidic acid receptor-mediated signaling.</title>
        <authorList>
            <person name="Fukushima N."/>
            <person name="Ishii S."/>
            <person name="Tsujiuchi T."/>
            <person name="Kagawa N."/>
            <person name="Katoh K."/>
        </authorList>
    </citation>
    <scope>REVIEW</scope>
</reference>
<reference key="15">
    <citation type="journal article" date="2019" name="Dev. Cell">
        <title>Akt Regulates a Rab11-Effector Switch Required for Ciliogenesis.</title>
        <authorList>
            <person name="Walia V."/>
            <person name="Cuenca A."/>
            <person name="Vetter M."/>
            <person name="Insinna C."/>
            <person name="Perera S."/>
            <person name="Lu Q."/>
            <person name="Ritt D.A."/>
            <person name="Semler E."/>
            <person name="Specht S."/>
            <person name="Stauffer J."/>
            <person name="Morrison D.K."/>
            <person name="Lorentzen E."/>
            <person name="Westlake C.J."/>
        </authorList>
    </citation>
    <scope>FUNCTION</scope>
</reference>
<reference key="16">
    <citation type="journal article" date="2015" name="Cell">
        <title>Crystal structure of antagonist bound human lysophosphatidic acid receptor 1.</title>
        <authorList>
            <person name="Chrencik J.E."/>
            <person name="Roth C.B."/>
            <person name="Terakado M."/>
            <person name="Kurata H."/>
            <person name="Omi R."/>
            <person name="Kihara Y."/>
            <person name="Warshaviak D."/>
            <person name="Nakade S."/>
            <person name="Asmar-Rovira G."/>
            <person name="Mileni M."/>
            <person name="Mizuno H."/>
            <person name="Griffith M.T."/>
            <person name="Rodgers C."/>
            <person name="Han G.W."/>
            <person name="Velasquez J."/>
            <person name="Chun J."/>
            <person name="Stevens R.C."/>
            <person name="Hanson M.A."/>
        </authorList>
    </citation>
    <scope>X-RAY CRYSTALLOGRAPHY (2.90 ANGSTROMS) OF 2-326 IN COMPLEXES WITH SYNTHETIC ANTAGONISTS</scope>
    <scope>FUNCTION</scope>
    <scope>SUBCELLULAR LOCATION</scope>
    <scope>TOPOLOGY</scope>
    <scope>DISULFIDE BOND</scope>
</reference>
<dbReference type="EMBL" id="U80811">
    <property type="protein sequence ID" value="AAC51139.1"/>
    <property type="molecule type" value="mRNA"/>
</dbReference>
<dbReference type="EMBL" id="Y09479">
    <property type="protein sequence ID" value="CAA70686.1"/>
    <property type="molecule type" value="mRNA"/>
</dbReference>
<dbReference type="EMBL" id="Y09479">
    <property type="protein sequence ID" value="CAA70687.1"/>
    <property type="molecule type" value="mRNA"/>
</dbReference>
<dbReference type="EMBL" id="U78192">
    <property type="protein sequence ID" value="AAC00530.1"/>
    <property type="molecule type" value="mRNA"/>
</dbReference>
<dbReference type="EMBL" id="AY322546">
    <property type="protein sequence ID" value="AAP84359.1"/>
    <property type="molecule type" value="mRNA"/>
</dbReference>
<dbReference type="EMBL" id="AK296374">
    <property type="protein sequence ID" value="BAG59048.1"/>
    <property type="molecule type" value="mRNA"/>
</dbReference>
<dbReference type="EMBL" id="AC007157">
    <property type="status" value="NOT_ANNOTATED_CDS"/>
    <property type="molecule type" value="Genomic_DNA"/>
</dbReference>
<dbReference type="EMBL" id="AL157881">
    <property type="status" value="NOT_ANNOTATED_CDS"/>
    <property type="molecule type" value="Genomic_DNA"/>
</dbReference>
<dbReference type="EMBL" id="AL442064">
    <property type="status" value="NOT_ANNOTATED_CDS"/>
    <property type="molecule type" value="Genomic_DNA"/>
</dbReference>
<dbReference type="EMBL" id="BC030615">
    <property type="protein sequence ID" value="AAH30615.1"/>
    <property type="molecule type" value="mRNA"/>
</dbReference>
<dbReference type="EMBL" id="BC036034">
    <property type="protein sequence ID" value="AAH36034.1"/>
    <property type="molecule type" value="mRNA"/>
</dbReference>
<dbReference type="CCDS" id="CCDS6777.1">
    <molecule id="Q92633-1"/>
</dbReference>
<dbReference type="PIR" id="JC5293">
    <property type="entry name" value="JC5293"/>
</dbReference>
<dbReference type="RefSeq" id="NP_001338326.1">
    <molecule id="Q92633-1"/>
    <property type="nucleotide sequence ID" value="NM_001351397.2"/>
</dbReference>
<dbReference type="RefSeq" id="NP_001338327.1">
    <molecule id="Q92633-1"/>
    <property type="nucleotide sequence ID" value="NM_001351398.2"/>
</dbReference>
<dbReference type="RefSeq" id="NP_001338328.1">
    <molecule id="Q92633-1"/>
    <property type="nucleotide sequence ID" value="NM_001351399.2"/>
</dbReference>
<dbReference type="RefSeq" id="NP_001338329.1">
    <molecule id="Q92633-1"/>
    <property type="nucleotide sequence ID" value="NM_001351400.2"/>
</dbReference>
<dbReference type="RefSeq" id="NP_001338330.1">
    <molecule id="Q92633-1"/>
    <property type="nucleotide sequence ID" value="NM_001351401.2"/>
</dbReference>
<dbReference type="RefSeq" id="NP_001338331.1">
    <molecule id="Q92633-1"/>
    <property type="nucleotide sequence ID" value="NM_001351402.2"/>
</dbReference>
<dbReference type="RefSeq" id="NP_001338332.1">
    <molecule id="Q92633-1"/>
    <property type="nucleotide sequence ID" value="NM_001351403.2"/>
</dbReference>
<dbReference type="RefSeq" id="NP_001338333.1">
    <molecule id="Q92633-1"/>
    <property type="nucleotide sequence ID" value="NM_001351404.2"/>
</dbReference>
<dbReference type="RefSeq" id="NP_001338334.1">
    <molecule id="Q92633-1"/>
    <property type="nucleotide sequence ID" value="NM_001351405.2"/>
</dbReference>
<dbReference type="RefSeq" id="NP_001338335.1">
    <molecule id="Q92633-1"/>
    <property type="nucleotide sequence ID" value="NM_001351406.2"/>
</dbReference>
<dbReference type="RefSeq" id="NP_001338336.1">
    <molecule id="Q92633-1"/>
    <property type="nucleotide sequence ID" value="NM_001351407.2"/>
</dbReference>
<dbReference type="RefSeq" id="NP_001338337.1">
    <molecule id="Q92633-1"/>
    <property type="nucleotide sequence ID" value="NM_001351408.2"/>
</dbReference>
<dbReference type="RefSeq" id="NP_001338338.1">
    <molecule id="Q92633-1"/>
    <property type="nucleotide sequence ID" value="NM_001351409.2"/>
</dbReference>
<dbReference type="RefSeq" id="NP_001338339.1">
    <molecule id="Q92633-1"/>
    <property type="nucleotide sequence ID" value="NM_001351410.2"/>
</dbReference>
<dbReference type="RefSeq" id="NP_001338340.1">
    <molecule id="Q92633-1"/>
    <property type="nucleotide sequence ID" value="NM_001351411.2"/>
</dbReference>
<dbReference type="RefSeq" id="NP_001338341.1">
    <molecule id="Q92633-1"/>
    <property type="nucleotide sequence ID" value="NM_001351412.2"/>
</dbReference>
<dbReference type="RefSeq" id="NP_001338342.1">
    <molecule id="Q92633-1"/>
    <property type="nucleotide sequence ID" value="NM_001351413.2"/>
</dbReference>
<dbReference type="RefSeq" id="NP_001338343.1">
    <molecule id="Q92633-1"/>
    <property type="nucleotide sequence ID" value="NM_001351414.2"/>
</dbReference>
<dbReference type="RefSeq" id="NP_001338344.1">
    <molecule id="Q92633-1"/>
    <property type="nucleotide sequence ID" value="NM_001351415.2"/>
</dbReference>
<dbReference type="RefSeq" id="NP_001338345.1">
    <molecule id="Q92633-1"/>
    <property type="nucleotide sequence ID" value="NM_001351416.2"/>
</dbReference>
<dbReference type="RefSeq" id="NP_001338346.1">
    <molecule id="Q92633-1"/>
    <property type="nucleotide sequence ID" value="NM_001351417.2"/>
</dbReference>
<dbReference type="RefSeq" id="NP_001338347.1">
    <molecule id="Q92633-1"/>
    <property type="nucleotide sequence ID" value="NM_001351418.2"/>
</dbReference>
<dbReference type="RefSeq" id="NP_001338348.1">
    <molecule id="Q92633-1"/>
    <property type="nucleotide sequence ID" value="NM_001351419.2"/>
</dbReference>
<dbReference type="RefSeq" id="NP_001338349.1">
    <molecule id="Q92633-1"/>
    <property type="nucleotide sequence ID" value="NM_001351420.2"/>
</dbReference>
<dbReference type="RefSeq" id="NP_001374399.1">
    <molecule id="Q92633-1"/>
    <property type="nucleotide sequence ID" value="NM_001387470.1"/>
</dbReference>
<dbReference type="RefSeq" id="NP_001374400.1">
    <molecule id="Q92633-1"/>
    <property type="nucleotide sequence ID" value="NM_001387471.1"/>
</dbReference>
<dbReference type="RefSeq" id="NP_001374401.1">
    <molecule id="Q92633-1"/>
    <property type="nucleotide sequence ID" value="NM_001387472.1"/>
</dbReference>
<dbReference type="RefSeq" id="NP_001374402.1">
    <molecule id="Q92633-1"/>
    <property type="nucleotide sequence ID" value="NM_001387473.1"/>
</dbReference>
<dbReference type="RefSeq" id="NP_001374403.1">
    <molecule id="Q92633-1"/>
    <property type="nucleotide sequence ID" value="NM_001387474.1"/>
</dbReference>
<dbReference type="RefSeq" id="NP_001374404.1">
    <molecule id="Q92633-1"/>
    <property type="nucleotide sequence ID" value="NM_001387475.1"/>
</dbReference>
<dbReference type="RefSeq" id="NP_001374405.1">
    <molecule id="Q92633-1"/>
    <property type="nucleotide sequence ID" value="NM_001387476.1"/>
</dbReference>
<dbReference type="RefSeq" id="NP_001374406.1">
    <molecule id="Q92633-1"/>
    <property type="nucleotide sequence ID" value="NM_001387477.1"/>
</dbReference>
<dbReference type="RefSeq" id="NP_001374407.1">
    <molecule id="Q92633-1"/>
    <property type="nucleotide sequence ID" value="NM_001387478.1"/>
</dbReference>
<dbReference type="RefSeq" id="NP_001374408.1">
    <molecule id="Q92633-1"/>
    <property type="nucleotide sequence ID" value="NM_001387479.1"/>
</dbReference>
<dbReference type="RefSeq" id="NP_001374409.1">
    <molecule id="Q92633-1"/>
    <property type="nucleotide sequence ID" value="NM_001387480.1"/>
</dbReference>
<dbReference type="RefSeq" id="NP_001374410.1">
    <molecule id="Q92633-1"/>
    <property type="nucleotide sequence ID" value="NM_001387481.1"/>
</dbReference>
<dbReference type="RefSeq" id="NP_001374411.1">
    <molecule id="Q92633-1"/>
    <property type="nucleotide sequence ID" value="NM_001387482.1"/>
</dbReference>
<dbReference type="RefSeq" id="NP_001374412.1">
    <molecule id="Q92633-1"/>
    <property type="nucleotide sequence ID" value="NM_001387483.1"/>
</dbReference>
<dbReference type="RefSeq" id="NP_001374413.1">
    <molecule id="Q92633-1"/>
    <property type="nucleotide sequence ID" value="NM_001387484.1"/>
</dbReference>
<dbReference type="RefSeq" id="NP_001374414.1">
    <molecule id="Q92633-1"/>
    <property type="nucleotide sequence ID" value="NM_001387485.1"/>
</dbReference>
<dbReference type="RefSeq" id="NP_001374415.1">
    <molecule id="Q92633-1"/>
    <property type="nucleotide sequence ID" value="NM_001387486.1"/>
</dbReference>
<dbReference type="RefSeq" id="NP_001374416.1">
    <molecule id="Q92633-1"/>
    <property type="nucleotide sequence ID" value="NM_001387487.1"/>
</dbReference>
<dbReference type="RefSeq" id="NP_001374417.1">
    <molecule id="Q92633-1"/>
    <property type="nucleotide sequence ID" value="NM_001387488.1"/>
</dbReference>
<dbReference type="RefSeq" id="NP_001374418.1">
    <molecule id="Q92633-1"/>
    <property type="nucleotide sequence ID" value="NM_001387489.1"/>
</dbReference>
<dbReference type="RefSeq" id="NP_001374419.1">
    <molecule id="Q92633-1"/>
    <property type="nucleotide sequence ID" value="NM_001387490.1"/>
</dbReference>
<dbReference type="RefSeq" id="NP_001374420.1">
    <molecule id="Q92633-1"/>
    <property type="nucleotide sequence ID" value="NM_001387491.1"/>
</dbReference>
<dbReference type="RefSeq" id="NP_001374421.1">
    <molecule id="Q92633-1"/>
    <property type="nucleotide sequence ID" value="NM_001387492.1"/>
</dbReference>
<dbReference type="RefSeq" id="NP_001374422.1">
    <molecule id="Q92633-1"/>
    <property type="nucleotide sequence ID" value="NM_001387493.1"/>
</dbReference>
<dbReference type="RefSeq" id="NP_001374423.1">
    <molecule id="Q92633-1"/>
    <property type="nucleotide sequence ID" value="NM_001387494.1"/>
</dbReference>
<dbReference type="RefSeq" id="NP_001374424.1">
    <molecule id="Q92633-1"/>
    <property type="nucleotide sequence ID" value="NM_001387495.1"/>
</dbReference>
<dbReference type="RefSeq" id="NP_001374425.1">
    <molecule id="Q92633-1"/>
    <property type="nucleotide sequence ID" value="NM_001387496.1"/>
</dbReference>
<dbReference type="RefSeq" id="NP_001374426.1">
    <molecule id="Q92633-1"/>
    <property type="nucleotide sequence ID" value="NM_001387497.1"/>
</dbReference>
<dbReference type="RefSeq" id="NP_001374427.1">
    <molecule id="Q92633-1"/>
    <property type="nucleotide sequence ID" value="NM_001387498.1"/>
</dbReference>
<dbReference type="RefSeq" id="NP_001374430.1">
    <molecule id="Q92633-1"/>
    <property type="nucleotide sequence ID" value="NM_001387501.1"/>
</dbReference>
<dbReference type="RefSeq" id="NP_001374431.1">
    <molecule id="Q92633-1"/>
    <property type="nucleotide sequence ID" value="NM_001387502.1"/>
</dbReference>
<dbReference type="RefSeq" id="NP_001374432.1">
    <molecule id="Q92633-1"/>
    <property type="nucleotide sequence ID" value="NM_001387503.1"/>
</dbReference>
<dbReference type="RefSeq" id="NP_001374433.1">
    <molecule id="Q92633-1"/>
    <property type="nucleotide sequence ID" value="NM_001387504.1"/>
</dbReference>
<dbReference type="RefSeq" id="NP_001374434.1">
    <molecule id="Q92633-1"/>
    <property type="nucleotide sequence ID" value="NM_001387505.1"/>
</dbReference>
<dbReference type="RefSeq" id="NP_001374435.1">
    <molecule id="Q92633-1"/>
    <property type="nucleotide sequence ID" value="NM_001387506.1"/>
</dbReference>
<dbReference type="RefSeq" id="NP_001374436.1">
    <molecule id="Q92633-1"/>
    <property type="nucleotide sequence ID" value="NM_001387507.1"/>
</dbReference>
<dbReference type="RefSeq" id="NP_001374437.1">
    <molecule id="Q92633-1"/>
    <property type="nucleotide sequence ID" value="NM_001387508.1"/>
</dbReference>
<dbReference type="RefSeq" id="NP_001374438.1">
    <molecule id="Q92633-1"/>
    <property type="nucleotide sequence ID" value="NM_001387509.1"/>
</dbReference>
<dbReference type="RefSeq" id="NP_001374439.1">
    <molecule id="Q92633-1"/>
    <property type="nucleotide sequence ID" value="NM_001387510.1"/>
</dbReference>
<dbReference type="RefSeq" id="NP_001374440.1">
    <molecule id="Q92633-1"/>
    <property type="nucleotide sequence ID" value="NM_001387511.1"/>
</dbReference>
<dbReference type="RefSeq" id="NP_001374441.1">
    <molecule id="Q92633-1"/>
    <property type="nucleotide sequence ID" value="NM_001387512.1"/>
</dbReference>
<dbReference type="RefSeq" id="NP_001374442.1">
    <molecule id="Q92633-1"/>
    <property type="nucleotide sequence ID" value="NM_001387513.1"/>
</dbReference>
<dbReference type="RefSeq" id="NP_001374443.1">
    <molecule id="Q92633-1"/>
    <property type="nucleotide sequence ID" value="NM_001387514.1"/>
</dbReference>
<dbReference type="RefSeq" id="NP_001374444.1">
    <molecule id="Q92633-1"/>
    <property type="nucleotide sequence ID" value="NM_001387515.1"/>
</dbReference>
<dbReference type="RefSeq" id="NP_001392.2">
    <molecule id="Q92633-1"/>
    <property type="nucleotide sequence ID" value="NM_001401.3"/>
</dbReference>
<dbReference type="RefSeq" id="NP_476500.1">
    <molecule id="Q92633-1"/>
    <property type="nucleotide sequence ID" value="NM_057159.4"/>
</dbReference>
<dbReference type="RefSeq" id="XP_005251838.1">
    <property type="nucleotide sequence ID" value="XM_005251781.3"/>
</dbReference>
<dbReference type="RefSeq" id="XP_005251839.1">
    <property type="nucleotide sequence ID" value="XM_005251782.3"/>
</dbReference>
<dbReference type="RefSeq" id="XP_016869872.1">
    <property type="nucleotide sequence ID" value="XM_017014383.1"/>
</dbReference>
<dbReference type="RefSeq" id="XP_016869873.1">
    <property type="nucleotide sequence ID" value="XM_017014384.1"/>
</dbReference>
<dbReference type="RefSeq" id="XP_016869874.1">
    <property type="nucleotide sequence ID" value="XM_017014385.1"/>
</dbReference>
<dbReference type="RefSeq" id="XP_016869875.1">
    <property type="nucleotide sequence ID" value="XM_017014386.1"/>
</dbReference>
<dbReference type="RefSeq" id="XP_016869876.1">
    <property type="nucleotide sequence ID" value="XM_017014387.1"/>
</dbReference>
<dbReference type="RefSeq" id="XP_016869877.1">
    <property type="nucleotide sequence ID" value="XM_017014388.1"/>
</dbReference>
<dbReference type="RefSeq" id="XP_016869878.1">
    <property type="nucleotide sequence ID" value="XM_017014389.1"/>
</dbReference>
<dbReference type="RefSeq" id="XP_016869879.1">
    <property type="nucleotide sequence ID" value="XM_017014390.1"/>
</dbReference>
<dbReference type="RefSeq" id="XP_016869880.1">
    <property type="nucleotide sequence ID" value="XM_017014391.1"/>
</dbReference>
<dbReference type="RefSeq" id="XP_016869881.1">
    <property type="nucleotide sequence ID" value="XM_017014392.1"/>
</dbReference>
<dbReference type="RefSeq" id="XP_016869882.1">
    <property type="nucleotide sequence ID" value="XM_017014393.1"/>
</dbReference>
<dbReference type="RefSeq" id="XP_016869883.1">
    <property type="nucleotide sequence ID" value="XM_017014394.1"/>
</dbReference>
<dbReference type="RefSeq" id="XP_016869884.1">
    <property type="nucleotide sequence ID" value="XM_017014395.1"/>
</dbReference>
<dbReference type="RefSeq" id="XP_016869885.1">
    <property type="nucleotide sequence ID" value="XM_017014396.1"/>
</dbReference>
<dbReference type="RefSeq" id="XP_016869886.1">
    <property type="nucleotide sequence ID" value="XM_017014397.1"/>
</dbReference>
<dbReference type="RefSeq" id="XP_016869887.1">
    <property type="nucleotide sequence ID" value="XM_017014398.1"/>
</dbReference>
<dbReference type="RefSeq" id="XP_016869888.1">
    <property type="nucleotide sequence ID" value="XM_017014399.1"/>
</dbReference>
<dbReference type="RefSeq" id="XP_016869889.1">
    <property type="nucleotide sequence ID" value="XM_017014400.1"/>
</dbReference>
<dbReference type="RefSeq" id="XP_016869890.1">
    <property type="nucleotide sequence ID" value="XM_017014401.1"/>
</dbReference>
<dbReference type="RefSeq" id="XP_016869891.1">
    <property type="nucleotide sequence ID" value="XM_017014402.1"/>
</dbReference>
<dbReference type="RefSeq" id="XP_016869892.1">
    <property type="nucleotide sequence ID" value="XM_017014403.1"/>
</dbReference>
<dbReference type="RefSeq" id="XP_016869893.1">
    <property type="nucleotide sequence ID" value="XM_017014404.1"/>
</dbReference>
<dbReference type="RefSeq" id="XP_016869894.1">
    <property type="nucleotide sequence ID" value="XM_017014405.1"/>
</dbReference>
<dbReference type="RefSeq" id="XP_016869895.1">
    <property type="nucleotide sequence ID" value="XM_017014406.1"/>
</dbReference>
<dbReference type="RefSeq" id="XP_016869896.1">
    <property type="nucleotide sequence ID" value="XM_017014407.1"/>
</dbReference>
<dbReference type="RefSeq" id="XP_047278859.1">
    <molecule id="Q92633-1"/>
    <property type="nucleotide sequence ID" value="XM_047422903.1"/>
</dbReference>
<dbReference type="PDB" id="4Z34">
    <property type="method" value="X-ray"/>
    <property type="resolution" value="3.00 A"/>
    <property type="chains" value="A=2-232, A=248-326"/>
</dbReference>
<dbReference type="PDB" id="4Z35">
    <property type="method" value="X-ray"/>
    <property type="resolution" value="2.90 A"/>
    <property type="chains" value="A=2-232, A=248-326"/>
</dbReference>
<dbReference type="PDB" id="4Z36">
    <property type="method" value="X-ray"/>
    <property type="resolution" value="2.90 A"/>
    <property type="chains" value="A=2-232, A=249-327"/>
</dbReference>
<dbReference type="PDB" id="7TD0">
    <property type="method" value="EM"/>
    <property type="resolution" value="2.83 A"/>
    <property type="chains" value="R=2-340"/>
</dbReference>
<dbReference type="PDB" id="7TD1">
    <property type="method" value="EM"/>
    <property type="resolution" value="3.08 A"/>
    <property type="chains" value="R=2-340"/>
</dbReference>
<dbReference type="PDB" id="7TD2">
    <property type="method" value="EM"/>
    <property type="resolution" value="3.11 A"/>
    <property type="chains" value="R=2-340"/>
</dbReference>
<dbReference type="PDB" id="7YU3">
    <property type="method" value="EM"/>
    <property type="resolution" value="3.40 A"/>
    <property type="chains" value="R=2-364"/>
</dbReference>
<dbReference type="PDB" id="7YU4">
    <property type="method" value="EM"/>
    <property type="resolution" value="3.30 A"/>
    <property type="chains" value="A=2-364"/>
</dbReference>
<dbReference type="PDB" id="7YU5">
    <property type="method" value="EM"/>
    <property type="resolution" value="3.30 A"/>
    <property type="chains" value="R=2-364"/>
</dbReference>
<dbReference type="PDB" id="7YU6">
    <property type="method" value="EM"/>
    <property type="resolution" value="3.50 A"/>
    <property type="chains" value="R=2-364"/>
</dbReference>
<dbReference type="PDB" id="7YU7">
    <property type="method" value="EM"/>
    <property type="resolution" value="3.80 A"/>
    <property type="chains" value="R=2-364"/>
</dbReference>
<dbReference type="PDB" id="7YU8">
    <property type="method" value="EM"/>
    <property type="resolution" value="4.50 A"/>
    <property type="chains" value="R=2-364"/>
</dbReference>
<dbReference type="PDB" id="9IZF">
    <property type="method" value="EM"/>
    <property type="resolution" value="3.14 A"/>
    <property type="chains" value="R=2-364"/>
</dbReference>
<dbReference type="PDB" id="9IZG">
    <property type="method" value="EM"/>
    <property type="resolution" value="3.04 A"/>
    <property type="chains" value="R=2-364"/>
</dbReference>
<dbReference type="PDB" id="9IZH">
    <property type="method" value="EM"/>
    <property type="resolution" value="3.04 A"/>
    <property type="chains" value="R=2-364"/>
</dbReference>
<dbReference type="PDB" id="9J5V">
    <property type="method" value="EM"/>
    <property type="resolution" value="2.86 A"/>
    <property type="chains" value="R=2-364"/>
</dbReference>
<dbReference type="PDBsum" id="4Z34"/>
<dbReference type="PDBsum" id="4Z35"/>
<dbReference type="PDBsum" id="4Z36"/>
<dbReference type="PDBsum" id="7TD0"/>
<dbReference type="PDBsum" id="7TD1"/>
<dbReference type="PDBsum" id="7TD2"/>
<dbReference type="PDBsum" id="7YU3"/>
<dbReference type="PDBsum" id="7YU4"/>
<dbReference type="PDBsum" id="7YU5"/>
<dbReference type="PDBsum" id="7YU6"/>
<dbReference type="PDBsum" id="7YU7"/>
<dbReference type="PDBsum" id="7YU8"/>
<dbReference type="PDBsum" id="9IZF"/>
<dbReference type="PDBsum" id="9IZG"/>
<dbReference type="PDBsum" id="9IZH"/>
<dbReference type="PDBsum" id="9J5V"/>
<dbReference type="EMDB" id="EMD-25819"/>
<dbReference type="EMDB" id="EMD-25820"/>
<dbReference type="EMDB" id="EMD-25821"/>
<dbReference type="EMDB" id="EMD-34097"/>
<dbReference type="EMDB" id="EMD-34098"/>
<dbReference type="EMDB" id="EMD-34099"/>
<dbReference type="EMDB" id="EMD-34100"/>
<dbReference type="EMDB" id="EMD-34101"/>
<dbReference type="EMDB" id="EMD-34102"/>
<dbReference type="EMDB" id="EMD-61031"/>
<dbReference type="EMDB" id="EMD-61032"/>
<dbReference type="EMDB" id="EMD-61033"/>
<dbReference type="EMDB" id="EMD-61154"/>
<dbReference type="SMR" id="Q92633"/>
<dbReference type="BioGRID" id="108226">
    <property type="interactions" value="235"/>
</dbReference>
<dbReference type="CORUM" id="Q92633"/>
<dbReference type="FunCoup" id="Q92633">
    <property type="interactions" value="1313"/>
</dbReference>
<dbReference type="IntAct" id="Q92633">
    <property type="interactions" value="177"/>
</dbReference>
<dbReference type="MINT" id="Q92633"/>
<dbReference type="STRING" id="9606.ENSP00000363553"/>
<dbReference type="BindingDB" id="Q92633"/>
<dbReference type="ChEMBL" id="CHEMBL3819"/>
<dbReference type="DrugBank" id="DB14948">
    <property type="generic name" value="BMS-986020"/>
</dbReference>
<dbReference type="DrugBank" id="DB18011">
    <property type="generic name" value="BMS-986278"/>
</dbReference>
<dbReference type="DrugBank" id="DB18124">
    <property type="generic name" value="Fipaxalparant"/>
</dbReference>
<dbReference type="GuidetoPHARMACOLOGY" id="272"/>
<dbReference type="SwissLipids" id="SLP:000001567"/>
<dbReference type="GlyCosmos" id="Q92633">
    <property type="glycosylation" value="2 sites, No reported glycans"/>
</dbReference>
<dbReference type="GlyGen" id="Q92633">
    <property type="glycosylation" value="4 sites, 1 N-linked glycan (1 site)"/>
</dbReference>
<dbReference type="iPTMnet" id="Q92633"/>
<dbReference type="PhosphoSitePlus" id="Q92633"/>
<dbReference type="SwissPalm" id="Q92633"/>
<dbReference type="BioMuta" id="LPAR1"/>
<dbReference type="DMDM" id="26454626"/>
<dbReference type="jPOST" id="Q92633"/>
<dbReference type="MassIVE" id="Q92633"/>
<dbReference type="PaxDb" id="9606-ENSP00000363553"/>
<dbReference type="PeptideAtlas" id="Q92633"/>
<dbReference type="ProteomicsDB" id="4425"/>
<dbReference type="ProteomicsDB" id="75389">
    <molecule id="Q92633-1"/>
</dbReference>
<dbReference type="Antibodypedia" id="15104">
    <property type="antibodies" value="404 antibodies from 36 providers"/>
</dbReference>
<dbReference type="DNASU" id="1902"/>
<dbReference type="Ensembl" id="ENST00000358883.8">
    <molecule id="Q92633-1"/>
    <property type="protein sequence ID" value="ENSP00000351755.4"/>
    <property type="gene ID" value="ENSG00000198121.15"/>
</dbReference>
<dbReference type="Ensembl" id="ENST00000374430.6">
    <molecule id="Q92633-1"/>
    <property type="protein sequence ID" value="ENSP00000363552.1"/>
    <property type="gene ID" value="ENSG00000198121.15"/>
</dbReference>
<dbReference type="Ensembl" id="ENST00000374431.7">
    <molecule id="Q92633-1"/>
    <property type="protein sequence ID" value="ENSP00000363553.3"/>
    <property type="gene ID" value="ENSG00000198121.15"/>
</dbReference>
<dbReference type="Ensembl" id="ENST00000683809.1">
    <molecule id="Q92633-1"/>
    <property type="protein sequence ID" value="ENSP00000506912.1"/>
    <property type="gene ID" value="ENSG00000198121.15"/>
</dbReference>
<dbReference type="GeneID" id="1902"/>
<dbReference type="KEGG" id="hsa:1902"/>
<dbReference type="MANE-Select" id="ENST00000683809.1">
    <property type="protein sequence ID" value="ENSP00000506912.1"/>
    <property type="RefSeq nucleotide sequence ID" value="NM_001351411.2"/>
    <property type="RefSeq protein sequence ID" value="NP_001338340.1"/>
</dbReference>
<dbReference type="UCSC" id="uc004bfa.4">
    <molecule id="Q92633-1"/>
    <property type="organism name" value="human"/>
</dbReference>
<dbReference type="AGR" id="HGNC:3166"/>
<dbReference type="CTD" id="1902"/>
<dbReference type="DisGeNET" id="1902"/>
<dbReference type="GeneCards" id="LPAR1"/>
<dbReference type="HGNC" id="HGNC:3166">
    <property type="gene designation" value="LPAR1"/>
</dbReference>
<dbReference type="HPA" id="ENSG00000198121">
    <property type="expression patterns" value="Tissue enriched (brain)"/>
</dbReference>
<dbReference type="MIM" id="602282">
    <property type="type" value="gene"/>
</dbReference>
<dbReference type="neXtProt" id="NX_Q92633"/>
<dbReference type="OpenTargets" id="ENSG00000198121"/>
<dbReference type="PharmGKB" id="PA162394187"/>
<dbReference type="VEuPathDB" id="HostDB:ENSG00000198121"/>
<dbReference type="eggNOG" id="KOG3656">
    <property type="taxonomic scope" value="Eukaryota"/>
</dbReference>
<dbReference type="GeneTree" id="ENSGT01120000271896"/>
<dbReference type="InParanoid" id="Q92633"/>
<dbReference type="OMA" id="CQRQENI"/>
<dbReference type="OrthoDB" id="5987098at2759"/>
<dbReference type="PAN-GO" id="Q92633">
    <property type="GO annotations" value="7 GO annotations based on evolutionary models"/>
</dbReference>
<dbReference type="PhylomeDB" id="Q92633"/>
<dbReference type="TreeFam" id="TF330052"/>
<dbReference type="PathwayCommons" id="Q92633"/>
<dbReference type="Reactome" id="R-HSA-416476">
    <property type="pathway name" value="G alpha (q) signalling events"/>
</dbReference>
<dbReference type="Reactome" id="R-HSA-418594">
    <property type="pathway name" value="G alpha (i) signalling events"/>
</dbReference>
<dbReference type="Reactome" id="R-HSA-419408">
    <property type="pathway name" value="Lysosphingolipid and LPA receptors"/>
</dbReference>
<dbReference type="SignaLink" id="Q92633"/>
<dbReference type="SIGNOR" id="Q92633"/>
<dbReference type="BioGRID-ORCS" id="1902">
    <property type="hits" value="30 hits in 1143 CRISPR screens"/>
</dbReference>
<dbReference type="ChiTaRS" id="LPAR1">
    <property type="organism name" value="human"/>
</dbReference>
<dbReference type="EvolutionaryTrace" id="Q92633"/>
<dbReference type="GeneWiki" id="LPAR1"/>
<dbReference type="GenomeRNAi" id="1902"/>
<dbReference type="Pharos" id="Q92633">
    <property type="development level" value="Tchem"/>
</dbReference>
<dbReference type="PRO" id="PR:Q92633"/>
<dbReference type="Proteomes" id="UP000005640">
    <property type="component" value="Chromosome 9"/>
</dbReference>
<dbReference type="RNAct" id="Q92633">
    <property type="molecule type" value="protein"/>
</dbReference>
<dbReference type="Bgee" id="ENSG00000198121">
    <property type="expression patterns" value="Expressed in medial globus pallidus and 204 other cell types or tissues"/>
</dbReference>
<dbReference type="ExpressionAtlas" id="Q92633">
    <property type="expression patterns" value="baseline and differential"/>
</dbReference>
<dbReference type="GO" id="GO:0009986">
    <property type="term" value="C:cell surface"/>
    <property type="evidence" value="ECO:0000314"/>
    <property type="project" value="UniProtKB"/>
</dbReference>
<dbReference type="GO" id="GO:0005737">
    <property type="term" value="C:cytoplasm"/>
    <property type="evidence" value="ECO:0000318"/>
    <property type="project" value="GO_Central"/>
</dbReference>
<dbReference type="GO" id="GO:0043198">
    <property type="term" value="C:dendritic shaft"/>
    <property type="evidence" value="ECO:0007669"/>
    <property type="project" value="Ensembl"/>
</dbReference>
<dbReference type="GO" id="GO:0043197">
    <property type="term" value="C:dendritic spine"/>
    <property type="evidence" value="ECO:0007669"/>
    <property type="project" value="Ensembl"/>
</dbReference>
<dbReference type="GO" id="GO:0005768">
    <property type="term" value="C:endosome"/>
    <property type="evidence" value="ECO:0000314"/>
    <property type="project" value="UniProtKB"/>
</dbReference>
<dbReference type="GO" id="GO:0098982">
    <property type="term" value="C:GABA-ergic synapse"/>
    <property type="evidence" value="ECO:0007669"/>
    <property type="project" value="Ensembl"/>
</dbReference>
<dbReference type="GO" id="GO:0098978">
    <property type="term" value="C:glutamatergic synapse"/>
    <property type="evidence" value="ECO:0007669"/>
    <property type="project" value="Ensembl"/>
</dbReference>
<dbReference type="GO" id="GO:0043025">
    <property type="term" value="C:neuronal cell body"/>
    <property type="evidence" value="ECO:0007669"/>
    <property type="project" value="Ensembl"/>
</dbReference>
<dbReference type="GO" id="GO:0005886">
    <property type="term" value="C:plasma membrane"/>
    <property type="evidence" value="ECO:0000314"/>
    <property type="project" value="UniProtKB"/>
</dbReference>
<dbReference type="GO" id="GO:0045211">
    <property type="term" value="C:postsynaptic membrane"/>
    <property type="evidence" value="ECO:0007669"/>
    <property type="project" value="Ensembl"/>
</dbReference>
<dbReference type="GO" id="GO:0042734">
    <property type="term" value="C:presynaptic membrane"/>
    <property type="evidence" value="ECO:0007669"/>
    <property type="project" value="Ensembl"/>
</dbReference>
<dbReference type="GO" id="GO:0004930">
    <property type="term" value="F:G protein-coupled receptor activity"/>
    <property type="evidence" value="ECO:0000304"/>
    <property type="project" value="ProtInc"/>
</dbReference>
<dbReference type="GO" id="GO:0001965">
    <property type="term" value="F:G-protein alpha-subunit binding"/>
    <property type="evidence" value="ECO:0007669"/>
    <property type="project" value="Ensembl"/>
</dbReference>
<dbReference type="GO" id="GO:0035727">
    <property type="term" value="F:lysophosphatidic acid binding"/>
    <property type="evidence" value="ECO:0000314"/>
    <property type="project" value="UniProtKB"/>
</dbReference>
<dbReference type="GO" id="GO:0070915">
    <property type="term" value="F:lysophosphatidic acid receptor activity"/>
    <property type="evidence" value="ECO:0000314"/>
    <property type="project" value="UniProtKB"/>
</dbReference>
<dbReference type="GO" id="GO:0030165">
    <property type="term" value="F:PDZ domain binding"/>
    <property type="evidence" value="ECO:0007669"/>
    <property type="project" value="Ensembl"/>
</dbReference>
<dbReference type="GO" id="GO:0007189">
    <property type="term" value="P:adenylate cyclase-activating G protein-coupled receptor signaling pathway"/>
    <property type="evidence" value="ECO:0000318"/>
    <property type="project" value="GO_Central"/>
</dbReference>
<dbReference type="GO" id="GO:0007193">
    <property type="term" value="P:adenylate cyclase-inhibiting G protein-coupled receptor signaling pathway"/>
    <property type="evidence" value="ECO:0000250"/>
    <property type="project" value="UniProtKB"/>
</dbReference>
<dbReference type="GO" id="GO:0032060">
    <property type="term" value="P:bleb assembly"/>
    <property type="evidence" value="ECO:0007669"/>
    <property type="project" value="Ensembl"/>
</dbReference>
<dbReference type="GO" id="GO:0060326">
    <property type="term" value="P:cell chemotaxis"/>
    <property type="evidence" value="ECO:0000315"/>
    <property type="project" value="UniProtKB"/>
</dbReference>
<dbReference type="GO" id="GO:1904566">
    <property type="term" value="P:cellular response to 1-oleoyl-sn-glycerol 3-phosphate"/>
    <property type="evidence" value="ECO:0007669"/>
    <property type="project" value="Ensembl"/>
</dbReference>
<dbReference type="GO" id="GO:0071453">
    <property type="term" value="P:cellular response to oxygen levels"/>
    <property type="evidence" value="ECO:0007669"/>
    <property type="project" value="Ensembl"/>
</dbReference>
<dbReference type="GO" id="GO:0021549">
    <property type="term" value="P:cerebellum development"/>
    <property type="evidence" value="ECO:0007669"/>
    <property type="project" value="Ensembl"/>
</dbReference>
<dbReference type="GO" id="GO:0022038">
    <property type="term" value="P:corpus callosum development"/>
    <property type="evidence" value="ECO:0007669"/>
    <property type="project" value="Ensembl"/>
</dbReference>
<dbReference type="GO" id="GO:0007186">
    <property type="term" value="P:G protein-coupled receptor signaling pathway"/>
    <property type="evidence" value="ECO:0000314"/>
    <property type="project" value="UniProtKB"/>
</dbReference>
<dbReference type="GO" id="GO:0042552">
    <property type="term" value="P:myelination"/>
    <property type="evidence" value="ECO:0007669"/>
    <property type="project" value="Ensembl"/>
</dbReference>
<dbReference type="GO" id="GO:0141162">
    <property type="term" value="P:negative regulation of cAMP/PKA signal transduction"/>
    <property type="evidence" value="ECO:0007669"/>
    <property type="project" value="Ensembl"/>
</dbReference>
<dbReference type="GO" id="GO:1902018">
    <property type="term" value="P:negative regulation of cilium assembly"/>
    <property type="evidence" value="ECO:0000314"/>
    <property type="project" value="UniProtKB"/>
</dbReference>
<dbReference type="GO" id="GO:0010977">
    <property type="term" value="P:negative regulation of neuron projection development"/>
    <property type="evidence" value="ECO:0000250"/>
    <property type="project" value="UniProtKB"/>
</dbReference>
<dbReference type="GO" id="GO:0022008">
    <property type="term" value="P:neurogenesis"/>
    <property type="evidence" value="ECO:0000318"/>
    <property type="project" value="GO_Central"/>
</dbReference>
<dbReference type="GO" id="GO:0014003">
    <property type="term" value="P:oligodendrocyte development"/>
    <property type="evidence" value="ECO:0007669"/>
    <property type="project" value="Ensembl"/>
</dbReference>
<dbReference type="GO" id="GO:0021554">
    <property type="term" value="P:optic nerve development"/>
    <property type="evidence" value="ECO:0007669"/>
    <property type="project" value="Ensembl"/>
</dbReference>
<dbReference type="GO" id="GO:0007200">
    <property type="term" value="P:phospholipase C-activating G protein-coupled receptor signaling pathway"/>
    <property type="evidence" value="ECO:0000315"/>
    <property type="project" value="UniProtKB"/>
</dbReference>
<dbReference type="GO" id="GO:0043065">
    <property type="term" value="P:positive regulation of apoptotic process"/>
    <property type="evidence" value="ECO:0007669"/>
    <property type="project" value="Ensembl"/>
</dbReference>
<dbReference type="GO" id="GO:0043123">
    <property type="term" value="P:positive regulation of canonical NF-kappaB signal transduction"/>
    <property type="evidence" value="ECO:0000270"/>
    <property type="project" value="UniProtKB"/>
</dbReference>
<dbReference type="GO" id="GO:0007204">
    <property type="term" value="P:positive regulation of cytosolic calcium ion concentration"/>
    <property type="evidence" value="ECO:0000304"/>
    <property type="project" value="ProtInc"/>
</dbReference>
<dbReference type="GO" id="GO:0060999">
    <property type="term" value="P:positive regulation of dendritic spine development"/>
    <property type="evidence" value="ECO:0007669"/>
    <property type="project" value="Ensembl"/>
</dbReference>
<dbReference type="GO" id="GO:0043410">
    <property type="term" value="P:positive regulation of MAPK cascade"/>
    <property type="evidence" value="ECO:0000250"/>
    <property type="project" value="UniProtKB"/>
</dbReference>
<dbReference type="GO" id="GO:0035025">
    <property type="term" value="P:positive regulation of Rho protein signal transduction"/>
    <property type="evidence" value="ECO:0000250"/>
    <property type="project" value="UniProtKB"/>
</dbReference>
<dbReference type="GO" id="GO:0071673">
    <property type="term" value="P:positive regulation of smooth muscle cell chemotaxis"/>
    <property type="evidence" value="ECO:0007669"/>
    <property type="project" value="Ensembl"/>
</dbReference>
<dbReference type="GO" id="GO:0051496">
    <property type="term" value="P:positive regulation of stress fiber assembly"/>
    <property type="evidence" value="ECO:0000250"/>
    <property type="project" value="UniProtKB"/>
</dbReference>
<dbReference type="GO" id="GO:0008360">
    <property type="term" value="P:regulation of cell shape"/>
    <property type="evidence" value="ECO:0000250"/>
    <property type="project" value="UniProtKB"/>
</dbReference>
<dbReference type="GO" id="GO:0019222">
    <property type="term" value="P:regulation of metabolic process"/>
    <property type="evidence" value="ECO:0000318"/>
    <property type="project" value="GO_Central"/>
</dbReference>
<dbReference type="GO" id="GO:0099149">
    <property type="term" value="P:regulation of postsynaptic neurotransmitter receptor internalization"/>
    <property type="evidence" value="ECO:0007669"/>
    <property type="project" value="Ensembl"/>
</dbReference>
<dbReference type="GO" id="GO:0098693">
    <property type="term" value="P:regulation of synaptic vesicle cycle"/>
    <property type="evidence" value="ECO:0007669"/>
    <property type="project" value="Ensembl"/>
</dbReference>
<dbReference type="CDD" id="cd15344">
    <property type="entry name" value="7tmA_LPAR1_Edg2"/>
    <property type="match status" value="1"/>
</dbReference>
<dbReference type="FunFam" id="1.20.1070.10:FF:000025">
    <property type="entry name" value="Lysophosphatidic acid receptor 1"/>
    <property type="match status" value="1"/>
</dbReference>
<dbReference type="Gene3D" id="1.20.1070.10">
    <property type="entry name" value="Rhodopsin 7-helix transmembrane proteins"/>
    <property type="match status" value="1"/>
</dbReference>
<dbReference type="InterPro" id="IPR000276">
    <property type="entry name" value="GPCR_Rhodpsn"/>
</dbReference>
<dbReference type="InterPro" id="IPR017452">
    <property type="entry name" value="GPCR_Rhodpsn_7TM"/>
</dbReference>
<dbReference type="InterPro" id="IPR004065">
    <property type="entry name" value="LPA_rcpt"/>
</dbReference>
<dbReference type="InterPro" id="IPR002277">
    <property type="entry name" value="LPA_rcpt_EDG2"/>
</dbReference>
<dbReference type="PANTHER" id="PTHR22750">
    <property type="entry name" value="G-PROTEIN COUPLED RECEPTOR"/>
    <property type="match status" value="1"/>
</dbReference>
<dbReference type="Pfam" id="PF00001">
    <property type="entry name" value="7tm_1"/>
    <property type="match status" value="1"/>
</dbReference>
<dbReference type="PRINTS" id="PR01148">
    <property type="entry name" value="EDG2RECEPTOR"/>
</dbReference>
<dbReference type="PRINTS" id="PR00237">
    <property type="entry name" value="GPCRRHODOPSN"/>
</dbReference>
<dbReference type="PRINTS" id="PR01527">
    <property type="entry name" value="LPARECEPTOR"/>
</dbReference>
<dbReference type="SMART" id="SM01381">
    <property type="entry name" value="7TM_GPCR_Srsx"/>
    <property type="match status" value="1"/>
</dbReference>
<dbReference type="SUPFAM" id="SSF81321">
    <property type="entry name" value="Family A G protein-coupled receptor-like"/>
    <property type="match status" value="1"/>
</dbReference>
<dbReference type="PROSITE" id="PS00237">
    <property type="entry name" value="G_PROTEIN_RECEP_F1_1"/>
    <property type="match status" value="1"/>
</dbReference>
<dbReference type="PROSITE" id="PS50262">
    <property type="entry name" value="G_PROTEIN_RECEP_F1_2"/>
    <property type="match status" value="1"/>
</dbReference>
<evidence type="ECO:0000250" key="1">
    <source>
        <dbReference type="UniProtKB" id="P61793"/>
    </source>
</evidence>
<evidence type="ECO:0000255" key="2"/>
<evidence type="ECO:0000255" key="3">
    <source>
        <dbReference type="PROSITE-ProRule" id="PRU00521"/>
    </source>
</evidence>
<evidence type="ECO:0000269" key="4">
    <source>
    </source>
</evidence>
<evidence type="ECO:0000269" key="5">
    <source>
    </source>
</evidence>
<evidence type="ECO:0000269" key="6">
    <source>
    </source>
</evidence>
<evidence type="ECO:0000269" key="7">
    <source>
    </source>
</evidence>
<evidence type="ECO:0000269" key="8">
    <source>
    </source>
</evidence>
<evidence type="ECO:0000269" key="9">
    <source>
    </source>
</evidence>
<evidence type="ECO:0000269" key="10">
    <source>
    </source>
</evidence>
<evidence type="ECO:0000269" key="11">
    <source>
    </source>
</evidence>
<evidence type="ECO:0000303" key="12">
    <source>
    </source>
</evidence>
<evidence type="ECO:0000303" key="13">
    <source>
    </source>
</evidence>
<evidence type="ECO:0000305" key="14"/>
<evidence type="ECO:0000305" key="15">
    <source>
    </source>
</evidence>
<evidence type="ECO:0000305" key="16">
    <source>
    </source>
</evidence>
<evidence type="ECO:0000305" key="17">
    <source>
    </source>
</evidence>
<evidence type="ECO:0007744" key="18">
    <source>
        <dbReference type="PDB" id="4Z34"/>
    </source>
</evidence>
<evidence type="ECO:0007744" key="19">
    <source>
        <dbReference type="PDB" id="4Z35"/>
    </source>
</evidence>
<evidence type="ECO:0007744" key="20">
    <source>
        <dbReference type="PDB" id="4Z36"/>
    </source>
</evidence>
<evidence type="ECO:0007744" key="21">
    <source>
    </source>
</evidence>
<evidence type="ECO:0007829" key="22">
    <source>
        <dbReference type="PDB" id="4Z35"/>
    </source>
</evidence>
<evidence type="ECO:0007829" key="23">
    <source>
        <dbReference type="PDB" id="7TD0"/>
    </source>
</evidence>
<evidence type="ECO:0007829" key="24">
    <source>
        <dbReference type="PDB" id="7TD2"/>
    </source>
</evidence>
<name>LPAR1_HUMAN</name>